<proteinExistence type="inferred from homology"/>
<sequence length="231" mass="26365">MQTVRSYFFGPTPQEQNRKWQSIIRKEQRQLDRQVYHLKAGRKKAEVQLKQLAKQSDITNMRILAKEIARANRHGKRLAESKALLGSLSLQLNDQMAMLKIQGTMQSSTKIMQDVSSLIRLPQLSETMRNLSMELTKAGVLEEMRDEMFLPVEDDEELMDLADEDEEVQEILTKYNVIPAPSEKAADAATHREQSLKQALPSLSNGIAKDSTEIDEEQLLDIRDKLDALKS</sequence>
<comment type="function">
    <text evidence="3">Class E VPS protein implicated in concentration and sorting of cargo proteins of the multivesicular body (MVB) for incorporation into intralumenal vesicles. The lumenal sequestrated membrane proteins will be targeted into the vacuole after fusion of the endosome with the vacuole.</text>
</comment>
<comment type="subunit">
    <text evidence="1">Component of the endosomal sorting required for transport complex III (ESCRT-III).</text>
</comment>
<comment type="subcellular location">
    <subcellularLocation>
        <location evidence="1">Endosome membrane</location>
        <topology evidence="1">Peripheral membrane protein</topology>
    </subcellularLocation>
    <subcellularLocation>
        <location evidence="1">Endomembrane system</location>
        <topology evidence="1">Peripheral membrane protein</topology>
    </subcellularLocation>
</comment>
<comment type="similarity">
    <text evidence="4">Belongs to the SNF7 family.</text>
</comment>
<protein>
    <recommendedName>
        <fullName>Vacuolar protein sorting-associated protein 24</fullName>
    </recommendedName>
</protein>
<reference key="1">
    <citation type="journal article" date="2002" name="Nature">
        <title>The genome sequence of Schizosaccharomyces pombe.</title>
        <authorList>
            <person name="Wood V."/>
            <person name="Gwilliam R."/>
            <person name="Rajandream M.A."/>
            <person name="Lyne M.H."/>
            <person name="Lyne R."/>
            <person name="Stewart A."/>
            <person name="Sgouros J.G."/>
            <person name="Peat N."/>
            <person name="Hayles J."/>
            <person name="Baker S.G."/>
            <person name="Basham D."/>
            <person name="Bowman S."/>
            <person name="Brooks K."/>
            <person name="Brown D."/>
            <person name="Brown S."/>
            <person name="Chillingworth T."/>
            <person name="Churcher C.M."/>
            <person name="Collins M."/>
            <person name="Connor R."/>
            <person name="Cronin A."/>
            <person name="Davis P."/>
            <person name="Feltwell T."/>
            <person name="Fraser A."/>
            <person name="Gentles S."/>
            <person name="Goble A."/>
            <person name="Hamlin N."/>
            <person name="Harris D.E."/>
            <person name="Hidalgo J."/>
            <person name="Hodgson G."/>
            <person name="Holroyd S."/>
            <person name="Hornsby T."/>
            <person name="Howarth S."/>
            <person name="Huckle E.J."/>
            <person name="Hunt S."/>
            <person name="Jagels K."/>
            <person name="James K.D."/>
            <person name="Jones L."/>
            <person name="Jones M."/>
            <person name="Leather S."/>
            <person name="McDonald S."/>
            <person name="McLean J."/>
            <person name="Mooney P."/>
            <person name="Moule S."/>
            <person name="Mungall K.L."/>
            <person name="Murphy L.D."/>
            <person name="Niblett D."/>
            <person name="Odell C."/>
            <person name="Oliver K."/>
            <person name="O'Neil S."/>
            <person name="Pearson D."/>
            <person name="Quail M.A."/>
            <person name="Rabbinowitsch E."/>
            <person name="Rutherford K.M."/>
            <person name="Rutter S."/>
            <person name="Saunders D."/>
            <person name="Seeger K."/>
            <person name="Sharp S."/>
            <person name="Skelton J."/>
            <person name="Simmonds M.N."/>
            <person name="Squares R."/>
            <person name="Squares S."/>
            <person name="Stevens K."/>
            <person name="Taylor K."/>
            <person name="Taylor R.G."/>
            <person name="Tivey A."/>
            <person name="Walsh S.V."/>
            <person name="Warren T."/>
            <person name="Whitehead S."/>
            <person name="Woodward J.R."/>
            <person name="Volckaert G."/>
            <person name="Aert R."/>
            <person name="Robben J."/>
            <person name="Grymonprez B."/>
            <person name="Weltjens I."/>
            <person name="Vanstreels E."/>
            <person name="Rieger M."/>
            <person name="Schaefer M."/>
            <person name="Mueller-Auer S."/>
            <person name="Gabel C."/>
            <person name="Fuchs M."/>
            <person name="Duesterhoeft A."/>
            <person name="Fritzc C."/>
            <person name="Holzer E."/>
            <person name="Moestl D."/>
            <person name="Hilbert H."/>
            <person name="Borzym K."/>
            <person name="Langer I."/>
            <person name="Beck A."/>
            <person name="Lehrach H."/>
            <person name="Reinhardt R."/>
            <person name="Pohl T.M."/>
            <person name="Eger P."/>
            <person name="Zimmermann W."/>
            <person name="Wedler H."/>
            <person name="Wambutt R."/>
            <person name="Purnelle B."/>
            <person name="Goffeau A."/>
            <person name="Cadieu E."/>
            <person name="Dreano S."/>
            <person name="Gloux S."/>
            <person name="Lelaure V."/>
            <person name="Mottier S."/>
            <person name="Galibert F."/>
            <person name="Aves S.J."/>
            <person name="Xiang Z."/>
            <person name="Hunt C."/>
            <person name="Moore K."/>
            <person name="Hurst S.M."/>
            <person name="Lucas M."/>
            <person name="Rochet M."/>
            <person name="Gaillardin C."/>
            <person name="Tallada V.A."/>
            <person name="Garzon A."/>
            <person name="Thode G."/>
            <person name="Daga R.R."/>
            <person name="Cruzado L."/>
            <person name="Jimenez J."/>
            <person name="Sanchez M."/>
            <person name="del Rey F."/>
            <person name="Benito J."/>
            <person name="Dominguez A."/>
            <person name="Revuelta J.L."/>
            <person name="Moreno S."/>
            <person name="Armstrong J."/>
            <person name="Forsburg S.L."/>
            <person name="Cerutti L."/>
            <person name="Lowe T."/>
            <person name="McCombie W.R."/>
            <person name="Paulsen I."/>
            <person name="Potashkin J."/>
            <person name="Shpakovski G.V."/>
            <person name="Ussery D."/>
            <person name="Barrell B.G."/>
            <person name="Nurse P."/>
        </authorList>
    </citation>
    <scope>NUCLEOTIDE SEQUENCE [LARGE SCALE GENOMIC DNA]</scope>
    <source>
        <strain>972 / ATCC 24843</strain>
    </source>
</reference>
<reference key="2">
    <citation type="journal article" date="2007" name="Microbiology">
        <title>Essential roles of class E Vps proteins for sorting into multivesicular bodies in Schizosaccharomyces pombe.</title>
        <authorList>
            <person name="Iwaki T."/>
            <person name="Onishi M."/>
            <person name="Ikeuchi M."/>
            <person name="Kita A."/>
            <person name="Sugiura R."/>
            <person name="Giga-Hama Y."/>
            <person name="Fukui Y."/>
            <person name="Takegawa K."/>
        </authorList>
    </citation>
    <scope>FUNCTION</scope>
</reference>
<evidence type="ECO:0000250" key="1"/>
<evidence type="ECO:0000256" key="2">
    <source>
        <dbReference type="SAM" id="MobiDB-lite"/>
    </source>
</evidence>
<evidence type="ECO:0000269" key="3">
    <source>
    </source>
</evidence>
<evidence type="ECO:0000305" key="4"/>
<organism>
    <name type="scientific">Schizosaccharomyces pombe (strain 972 / ATCC 24843)</name>
    <name type="common">Fission yeast</name>
    <dbReference type="NCBI Taxonomy" id="284812"/>
    <lineage>
        <taxon>Eukaryota</taxon>
        <taxon>Fungi</taxon>
        <taxon>Dikarya</taxon>
        <taxon>Ascomycota</taxon>
        <taxon>Taphrinomycotina</taxon>
        <taxon>Schizosaccharomycetes</taxon>
        <taxon>Schizosaccharomycetales</taxon>
        <taxon>Schizosaccharomycetaceae</taxon>
        <taxon>Schizosaccharomyces</taxon>
    </lineage>
</organism>
<gene>
    <name type="primary">vps24</name>
    <name type="ORF">SPAC9E9.14</name>
</gene>
<name>VPS24_SCHPO</name>
<dbReference type="EMBL" id="CU329670">
    <property type="protein sequence ID" value="CAB16412.1"/>
    <property type="molecule type" value="Genomic_DNA"/>
</dbReference>
<dbReference type="PIR" id="T39221">
    <property type="entry name" value="T39221"/>
</dbReference>
<dbReference type="RefSeq" id="NP_594587.1">
    <property type="nucleotide sequence ID" value="NM_001020016.2"/>
</dbReference>
<dbReference type="SMR" id="O14296"/>
<dbReference type="BioGRID" id="278706">
    <property type="interactions" value="4"/>
</dbReference>
<dbReference type="FunCoup" id="O14296">
    <property type="interactions" value="259"/>
</dbReference>
<dbReference type="STRING" id="284812.O14296"/>
<dbReference type="iPTMnet" id="O14296"/>
<dbReference type="PaxDb" id="4896-SPAC9E9.14.1"/>
<dbReference type="EnsemblFungi" id="SPAC9E9.14.1">
    <property type="protein sequence ID" value="SPAC9E9.14.1:pep"/>
    <property type="gene ID" value="SPAC9E9.14"/>
</dbReference>
<dbReference type="GeneID" id="2542234"/>
<dbReference type="KEGG" id="spo:2542234"/>
<dbReference type="PomBase" id="SPAC9E9.14">
    <property type="gene designation" value="vps24"/>
</dbReference>
<dbReference type="VEuPathDB" id="FungiDB:SPAC9E9.14"/>
<dbReference type="eggNOG" id="KOG3229">
    <property type="taxonomic scope" value="Eukaryota"/>
</dbReference>
<dbReference type="HOGENOM" id="CLU_069208_0_2_1"/>
<dbReference type="InParanoid" id="O14296"/>
<dbReference type="OMA" id="KILWEVT"/>
<dbReference type="PhylomeDB" id="O14296"/>
<dbReference type="Reactome" id="R-SPO-1632852">
    <property type="pathway name" value="Macroautophagy"/>
</dbReference>
<dbReference type="Reactome" id="R-SPO-917729">
    <property type="pathway name" value="Endosomal Sorting Complex Required For Transport (ESCRT)"/>
</dbReference>
<dbReference type="Reactome" id="R-SPO-9668328">
    <property type="pathway name" value="Sealing of the nuclear envelope (NE) by ESCRT-III"/>
</dbReference>
<dbReference type="PRO" id="PR:O14296"/>
<dbReference type="Proteomes" id="UP000002485">
    <property type="component" value="Chromosome I"/>
</dbReference>
<dbReference type="GO" id="GO:0000815">
    <property type="term" value="C:ESCRT III complex"/>
    <property type="evidence" value="ECO:0000318"/>
    <property type="project" value="GO_Central"/>
</dbReference>
<dbReference type="GO" id="GO:0180028">
    <property type="term" value="C:mitotic spindle pole body attachment site"/>
    <property type="evidence" value="ECO:0000269"/>
    <property type="project" value="PomBase"/>
</dbReference>
<dbReference type="GO" id="GO:0005771">
    <property type="term" value="C:multivesicular body"/>
    <property type="evidence" value="ECO:0000318"/>
    <property type="project" value="GO_Central"/>
</dbReference>
<dbReference type="GO" id="GO:0032509">
    <property type="term" value="P:endosome transport via multivesicular body sorting pathway"/>
    <property type="evidence" value="ECO:0000318"/>
    <property type="project" value="GO_Central"/>
</dbReference>
<dbReference type="GO" id="GO:0045324">
    <property type="term" value="P:late endosome to vacuole transport"/>
    <property type="evidence" value="ECO:0000315"/>
    <property type="project" value="PomBase"/>
</dbReference>
<dbReference type="GO" id="GO:0007084">
    <property type="term" value="P:mitotic nuclear membrane reassembly"/>
    <property type="evidence" value="ECO:0000303"/>
    <property type="project" value="PomBase"/>
</dbReference>
<dbReference type="GO" id="GO:0015031">
    <property type="term" value="P:protein transport"/>
    <property type="evidence" value="ECO:0000318"/>
    <property type="project" value="GO_Central"/>
</dbReference>
<dbReference type="GO" id="GO:0043328">
    <property type="term" value="P:protein transport to vacuole involved in ubiquitin-dependent protein catabolic process via the multivesicular body sorting pathway"/>
    <property type="evidence" value="ECO:0000315"/>
    <property type="project" value="PomBase"/>
</dbReference>
<dbReference type="Gene3D" id="6.10.140.1230">
    <property type="match status" value="1"/>
</dbReference>
<dbReference type="InterPro" id="IPR005024">
    <property type="entry name" value="Snf7_fam"/>
</dbReference>
<dbReference type="PANTHER" id="PTHR10476">
    <property type="entry name" value="CHARGED MULTIVESICULAR BODY PROTEIN"/>
    <property type="match status" value="1"/>
</dbReference>
<dbReference type="Pfam" id="PF03357">
    <property type="entry name" value="Snf7"/>
    <property type="match status" value="1"/>
</dbReference>
<accession>O14296</accession>
<keyword id="KW-0967">Endosome</keyword>
<keyword id="KW-0472">Membrane</keyword>
<keyword id="KW-0653">Protein transport</keyword>
<keyword id="KW-1185">Reference proteome</keyword>
<keyword id="KW-0813">Transport</keyword>
<feature type="chain" id="PRO_0000362997" description="Vacuolar protein sorting-associated protein 24">
    <location>
        <begin position="1"/>
        <end position="231"/>
    </location>
</feature>
<feature type="region of interest" description="Disordered" evidence="2">
    <location>
        <begin position="184"/>
        <end position="214"/>
    </location>
</feature>
<feature type="compositionally biased region" description="Basic and acidic residues" evidence="2">
    <location>
        <begin position="184"/>
        <end position="195"/>
    </location>
</feature>